<comment type="function">
    <text evidence="1">Mediates high-affinity intracellular uptake of the rare oligo-element molybdenum.</text>
</comment>
<comment type="subcellular location">
    <subcellularLocation>
        <location evidence="1">Cell membrane</location>
        <topology evidence="1">Multi-pass membrane protein</topology>
    </subcellularLocation>
</comment>
<comment type="similarity">
    <text evidence="3">Belongs to the major facilitator superfamily.</text>
</comment>
<organism>
    <name type="scientific">Takifugu rubripes</name>
    <name type="common">Japanese pufferfish</name>
    <name type="synonym">Fugu rubripes</name>
    <dbReference type="NCBI Taxonomy" id="31033"/>
    <lineage>
        <taxon>Eukaryota</taxon>
        <taxon>Metazoa</taxon>
        <taxon>Chordata</taxon>
        <taxon>Craniata</taxon>
        <taxon>Vertebrata</taxon>
        <taxon>Euteleostomi</taxon>
        <taxon>Actinopterygii</taxon>
        <taxon>Neopterygii</taxon>
        <taxon>Teleostei</taxon>
        <taxon>Neoteleostei</taxon>
        <taxon>Acanthomorphata</taxon>
        <taxon>Eupercaria</taxon>
        <taxon>Tetraodontiformes</taxon>
        <taxon>Tetradontoidea</taxon>
        <taxon>Tetraodontidae</taxon>
        <taxon>Takifugu</taxon>
    </lineage>
</organism>
<protein>
    <recommendedName>
        <fullName>Molybdate-anion transporter</fullName>
    </recommendedName>
    <alternativeName>
        <fullName>Major facilitator superfamily domain-containing protein 5</fullName>
    </alternativeName>
    <alternativeName>
        <fullName>Molybdate transporter 2 homolog</fullName>
    </alternativeName>
</protein>
<sequence length="480" mass="52988">MFVTAYFAVISLLALCVGLELTARRLTPPESSAAVNPAFRRFQATFLRAYLLALWADWLQGPYLYKLYRHYSFLESQIAILYVCGLASCVLFAPFSGWLSQALGRRHMCIFFCLSYATCCLTKLSRDYFVLIVGRILGGLSTSLLTTTFESWYVHHHVEIHDFPKEWIPTTFTKAATWNHGLAVGAGLVANLLAEWLHLGPVAPFLLAVPFLACCAWFVLTDWAKEEAEKSPEGIKQTLPLGTLNGGVTHLSARARFSRSCSDGLRCMLSDKRVMLLGGVQALFESVLYIFIFLWTPVLDPHGSPLGIVFSCFMAASMVGSLLFRVATSTRYHLQPGHVLCVAVLMAFFSFFMLTFSTVPGQPRPHESFLAFLLLELACGLYFPALNFLQGRIIPEEKRASVLAWFRLPLHLLACLGLLALHGEVSGTGAGETGSGTRHMFGGCAVMMLAALMAVVSLFTLGRNDTDLKLEGSRGEGEMY</sequence>
<feature type="chain" id="PRO_0000273405" description="Molybdate-anion transporter">
    <location>
        <begin position="1"/>
        <end position="480"/>
    </location>
</feature>
<feature type="transmembrane region" description="Helical" evidence="2">
    <location>
        <begin position="1"/>
        <end position="21"/>
    </location>
</feature>
<feature type="transmembrane region" description="Helical" evidence="2">
    <location>
        <begin position="44"/>
        <end position="63"/>
    </location>
</feature>
<feature type="transmembrane region" description="Helical" evidence="2">
    <location>
        <begin position="78"/>
        <end position="98"/>
    </location>
</feature>
<feature type="transmembrane region" description="Helical" evidence="2">
    <location>
        <begin position="129"/>
        <end position="149"/>
    </location>
</feature>
<feature type="transmembrane region" description="Helical" evidence="2">
    <location>
        <begin position="177"/>
        <end position="197"/>
    </location>
</feature>
<feature type="transmembrane region" description="Helical" evidence="2">
    <location>
        <begin position="199"/>
        <end position="219"/>
    </location>
</feature>
<feature type="transmembrane region" description="Helical" evidence="2">
    <location>
        <begin position="274"/>
        <end position="294"/>
    </location>
</feature>
<feature type="transmembrane region" description="Helical" evidence="2">
    <location>
        <begin position="304"/>
        <end position="324"/>
    </location>
</feature>
<feature type="transmembrane region" description="Helical" evidence="2">
    <location>
        <begin position="339"/>
        <end position="359"/>
    </location>
</feature>
<feature type="transmembrane region" description="Helical" evidence="2">
    <location>
        <begin position="369"/>
        <end position="389"/>
    </location>
</feature>
<feature type="transmembrane region" description="Helical" evidence="2">
    <location>
        <begin position="401"/>
        <end position="421"/>
    </location>
</feature>
<feature type="transmembrane region" description="Helical" evidence="2">
    <location>
        <begin position="441"/>
        <end position="461"/>
    </location>
</feature>
<name>MFSD5_TAKRU</name>
<gene>
    <name type="primary">mfsd5</name>
</gene>
<accession>Q1KKV8</accession>
<proteinExistence type="inferred from homology"/>
<keyword id="KW-1003">Cell membrane</keyword>
<keyword id="KW-0406">Ion transport</keyword>
<keyword id="KW-0472">Membrane</keyword>
<keyword id="KW-1185">Reference proteome</keyword>
<keyword id="KW-0812">Transmembrane</keyword>
<keyword id="KW-1133">Transmembrane helix</keyword>
<keyword id="KW-0813">Transport</keyword>
<reference key="1">
    <citation type="journal article" date="2006" name="Proc. Natl. Acad. Sci. U.S.A.">
        <title>Highly conserved syntenic blocks at the vertebrate Hox loci and conserved regulatory elements within and outside Hox gene clusters.</title>
        <authorList>
            <person name="Lee A.P."/>
            <person name="Koh E.G.L."/>
            <person name="Tay A."/>
            <person name="Brenner S."/>
            <person name="Venkatesh B."/>
        </authorList>
    </citation>
    <scope>NUCLEOTIDE SEQUENCE [GENOMIC DNA]</scope>
</reference>
<dbReference type="EMBL" id="DQ481667">
    <property type="protein sequence ID" value="ABF22436.1"/>
    <property type="molecule type" value="Genomic_DNA"/>
</dbReference>
<dbReference type="RefSeq" id="XP_003963205.2">
    <property type="nucleotide sequence ID" value="XM_003963156.3"/>
</dbReference>
<dbReference type="SMR" id="Q1KKV8"/>
<dbReference type="FunCoup" id="Q1KKV8">
    <property type="interactions" value="307"/>
</dbReference>
<dbReference type="STRING" id="31033.ENSTRUP00000053806"/>
<dbReference type="Ensembl" id="ENSTRUT00000056974.2">
    <property type="protein sequence ID" value="ENSTRUP00000053806.2"/>
    <property type="gene ID" value="ENSTRUG00000021121.2"/>
</dbReference>
<dbReference type="GeneID" id="101078972"/>
<dbReference type="KEGG" id="tru:101078972"/>
<dbReference type="CTD" id="84975"/>
<dbReference type="eggNOG" id="KOG4332">
    <property type="taxonomic scope" value="Eukaryota"/>
</dbReference>
<dbReference type="GeneTree" id="ENSGT00390000012629"/>
<dbReference type="InParanoid" id="Q1KKV8"/>
<dbReference type="OMA" id="CCGWVVL"/>
<dbReference type="OrthoDB" id="263957at2759"/>
<dbReference type="Proteomes" id="UP000005226">
    <property type="component" value="Chromosome 3"/>
</dbReference>
<dbReference type="GO" id="GO:0005886">
    <property type="term" value="C:plasma membrane"/>
    <property type="evidence" value="ECO:0007669"/>
    <property type="project" value="UniProtKB-SubCell"/>
</dbReference>
<dbReference type="GO" id="GO:0015098">
    <property type="term" value="F:molybdate ion transmembrane transporter activity"/>
    <property type="evidence" value="ECO:0007669"/>
    <property type="project" value="InterPro"/>
</dbReference>
<dbReference type="GO" id="GO:0006811">
    <property type="term" value="P:monoatomic ion transport"/>
    <property type="evidence" value="ECO:0007669"/>
    <property type="project" value="UniProtKB-KW"/>
</dbReference>
<dbReference type="CDD" id="cd17487">
    <property type="entry name" value="MFS_MFSD5_like"/>
    <property type="match status" value="1"/>
</dbReference>
<dbReference type="Gene3D" id="1.20.1250.20">
    <property type="entry name" value="MFS general substrate transporter like domains"/>
    <property type="match status" value="1"/>
</dbReference>
<dbReference type="InterPro" id="IPR036259">
    <property type="entry name" value="MFS_trans_sf"/>
</dbReference>
<dbReference type="InterPro" id="IPR008509">
    <property type="entry name" value="MOT2/MFSD5"/>
</dbReference>
<dbReference type="PANTHER" id="PTHR23516:SF1">
    <property type="entry name" value="MOLYBDATE-ANION TRANSPORTER"/>
    <property type="match status" value="1"/>
</dbReference>
<dbReference type="PANTHER" id="PTHR23516">
    <property type="entry name" value="SAM (S-ADENOSYL METHIONINE) TRANSPORTER"/>
    <property type="match status" value="1"/>
</dbReference>
<dbReference type="Pfam" id="PF05631">
    <property type="entry name" value="MFS_5"/>
    <property type="match status" value="1"/>
</dbReference>
<dbReference type="SUPFAM" id="SSF103473">
    <property type="entry name" value="MFS general substrate transporter"/>
    <property type="match status" value="1"/>
</dbReference>
<evidence type="ECO:0000250" key="1"/>
<evidence type="ECO:0000255" key="2"/>
<evidence type="ECO:0000305" key="3"/>